<reference key="1">
    <citation type="journal article" date="2008" name="Foodborne Pathog. Dis.">
        <title>The complete genome sequence and analysis of the human pathogen Campylobacter lari.</title>
        <authorList>
            <person name="Miller W.G."/>
            <person name="Wang G."/>
            <person name="Binnewies T.T."/>
            <person name="Parker C.T."/>
        </authorList>
    </citation>
    <scope>NUCLEOTIDE SEQUENCE [LARGE SCALE GENOMIC DNA]</scope>
    <source>
        <strain>RM2100 / D67 / ATCC BAA-1060</strain>
    </source>
</reference>
<organism>
    <name type="scientific">Campylobacter lari (strain RM2100 / D67 / ATCC BAA-1060)</name>
    <dbReference type="NCBI Taxonomy" id="306263"/>
    <lineage>
        <taxon>Bacteria</taxon>
        <taxon>Pseudomonadati</taxon>
        <taxon>Campylobacterota</taxon>
        <taxon>Epsilonproteobacteria</taxon>
        <taxon>Campylobacterales</taxon>
        <taxon>Campylobacteraceae</taxon>
        <taxon>Campylobacter</taxon>
    </lineage>
</organism>
<proteinExistence type="inferred from homology"/>
<sequence length="308" mass="34363">MQLIIATRKSQLALWQSEYIKNKLSQTHSDLEISLEGFKTKGDVLLDSPLAKIGGKGLFTKELEESMLRGDSHLAVHSLKDVPSFFPKGLVLAAISKREEVNDAFLSEYYESLNALPKGAKVGTTSLRRRMQLLALRPDLNIISLRGNINSRLEKLKAKEFDAIILAFAGIKRLGLEKQIKFVKKFELDEMIPAASQGALGIESIDDKQILKYLECLNDKNAFVETHIERDFIKTLEGGCQVPIGINAKIIDEKIEIRAIVGLPDASKILKEKRMIDKQDYAKAGELLAKEMIAKGAKEILKEAESMI</sequence>
<gene>
    <name evidence="1" type="primary">hemC</name>
    <name type="ordered locus">Cla_0767</name>
</gene>
<accession>B9KGA9</accession>
<comment type="function">
    <text evidence="1">Tetrapolymerization of the monopyrrole PBG into the hydroxymethylbilane pre-uroporphyrinogen in several discrete steps.</text>
</comment>
<comment type="catalytic activity">
    <reaction evidence="1">
        <text>4 porphobilinogen + H2O = hydroxymethylbilane + 4 NH4(+)</text>
        <dbReference type="Rhea" id="RHEA:13185"/>
        <dbReference type="ChEBI" id="CHEBI:15377"/>
        <dbReference type="ChEBI" id="CHEBI:28938"/>
        <dbReference type="ChEBI" id="CHEBI:57845"/>
        <dbReference type="ChEBI" id="CHEBI:58126"/>
        <dbReference type="EC" id="2.5.1.61"/>
    </reaction>
</comment>
<comment type="cofactor">
    <cofactor evidence="1">
        <name>dipyrromethane</name>
        <dbReference type="ChEBI" id="CHEBI:60342"/>
    </cofactor>
    <text evidence="1">Binds 1 dipyrromethane group covalently.</text>
</comment>
<comment type="pathway">
    <text evidence="1">Porphyrin-containing compound metabolism; protoporphyrin-IX biosynthesis; coproporphyrinogen-III from 5-aminolevulinate: step 2/4.</text>
</comment>
<comment type="subunit">
    <text evidence="1">Monomer.</text>
</comment>
<comment type="miscellaneous">
    <text evidence="1">The porphobilinogen subunits are added to the dipyrromethane group.</text>
</comment>
<comment type="similarity">
    <text evidence="1">Belongs to the HMBS family.</text>
</comment>
<evidence type="ECO:0000255" key="1">
    <source>
        <dbReference type="HAMAP-Rule" id="MF_00260"/>
    </source>
</evidence>
<protein>
    <recommendedName>
        <fullName evidence="1">Porphobilinogen deaminase</fullName>
        <shortName evidence="1">PBG</shortName>
        <ecNumber evidence="1">2.5.1.61</ecNumber>
    </recommendedName>
    <alternativeName>
        <fullName evidence="1">Hydroxymethylbilane synthase</fullName>
        <shortName evidence="1">HMBS</shortName>
    </alternativeName>
    <alternativeName>
        <fullName evidence="1">Pre-uroporphyrinogen synthase</fullName>
    </alternativeName>
</protein>
<feature type="chain" id="PRO_1000125659" description="Porphobilinogen deaminase">
    <location>
        <begin position="1"/>
        <end position="308"/>
    </location>
</feature>
<feature type="modified residue" description="S-(dipyrrolylmethanemethyl)cysteine" evidence="1">
    <location>
        <position position="240"/>
    </location>
</feature>
<name>HEM3_CAMLR</name>
<dbReference type="EC" id="2.5.1.61" evidence="1"/>
<dbReference type="EMBL" id="CP000932">
    <property type="protein sequence ID" value="ACM64094.1"/>
    <property type="molecule type" value="Genomic_DNA"/>
</dbReference>
<dbReference type="RefSeq" id="WP_012661477.1">
    <property type="nucleotide sequence ID" value="NC_012039.1"/>
</dbReference>
<dbReference type="SMR" id="B9KGA9"/>
<dbReference type="STRING" id="306263.Cla_0767"/>
<dbReference type="KEGG" id="cla:CLA_0767"/>
<dbReference type="PATRIC" id="fig|306263.5.peg.746"/>
<dbReference type="eggNOG" id="COG0181">
    <property type="taxonomic scope" value="Bacteria"/>
</dbReference>
<dbReference type="HOGENOM" id="CLU_019704_0_2_7"/>
<dbReference type="UniPathway" id="UPA00251">
    <property type="reaction ID" value="UER00319"/>
</dbReference>
<dbReference type="Proteomes" id="UP000007727">
    <property type="component" value="Chromosome"/>
</dbReference>
<dbReference type="GO" id="GO:0005737">
    <property type="term" value="C:cytoplasm"/>
    <property type="evidence" value="ECO:0007669"/>
    <property type="project" value="TreeGrafter"/>
</dbReference>
<dbReference type="GO" id="GO:0004418">
    <property type="term" value="F:hydroxymethylbilane synthase activity"/>
    <property type="evidence" value="ECO:0007669"/>
    <property type="project" value="UniProtKB-UniRule"/>
</dbReference>
<dbReference type="GO" id="GO:0006782">
    <property type="term" value="P:protoporphyrinogen IX biosynthetic process"/>
    <property type="evidence" value="ECO:0007669"/>
    <property type="project" value="UniProtKB-UniRule"/>
</dbReference>
<dbReference type="CDD" id="cd13646">
    <property type="entry name" value="PBP2_EcHMBS_like"/>
    <property type="match status" value="1"/>
</dbReference>
<dbReference type="FunFam" id="3.40.190.10:FF:000004">
    <property type="entry name" value="Porphobilinogen deaminase"/>
    <property type="match status" value="1"/>
</dbReference>
<dbReference type="FunFam" id="3.40.190.10:FF:000005">
    <property type="entry name" value="Porphobilinogen deaminase"/>
    <property type="match status" value="1"/>
</dbReference>
<dbReference type="Gene3D" id="3.40.190.10">
    <property type="entry name" value="Periplasmic binding protein-like II"/>
    <property type="match status" value="2"/>
</dbReference>
<dbReference type="Gene3D" id="3.30.160.40">
    <property type="entry name" value="Porphobilinogen deaminase, C-terminal domain"/>
    <property type="match status" value="1"/>
</dbReference>
<dbReference type="HAMAP" id="MF_00260">
    <property type="entry name" value="Porphobil_deam"/>
    <property type="match status" value="1"/>
</dbReference>
<dbReference type="InterPro" id="IPR000860">
    <property type="entry name" value="HemC"/>
</dbReference>
<dbReference type="InterPro" id="IPR022419">
    <property type="entry name" value="Porphobilin_deaminase_cofac_BS"/>
</dbReference>
<dbReference type="InterPro" id="IPR022417">
    <property type="entry name" value="Porphobilin_deaminase_N"/>
</dbReference>
<dbReference type="InterPro" id="IPR022418">
    <property type="entry name" value="Porphobilinogen_deaminase_C"/>
</dbReference>
<dbReference type="InterPro" id="IPR036803">
    <property type="entry name" value="Porphobilinogen_deaminase_C_sf"/>
</dbReference>
<dbReference type="NCBIfam" id="TIGR00212">
    <property type="entry name" value="hemC"/>
    <property type="match status" value="1"/>
</dbReference>
<dbReference type="PANTHER" id="PTHR11557">
    <property type="entry name" value="PORPHOBILINOGEN DEAMINASE"/>
    <property type="match status" value="1"/>
</dbReference>
<dbReference type="PANTHER" id="PTHR11557:SF0">
    <property type="entry name" value="PORPHOBILINOGEN DEAMINASE"/>
    <property type="match status" value="1"/>
</dbReference>
<dbReference type="Pfam" id="PF01379">
    <property type="entry name" value="Porphobil_deam"/>
    <property type="match status" value="1"/>
</dbReference>
<dbReference type="Pfam" id="PF03900">
    <property type="entry name" value="Porphobil_deamC"/>
    <property type="match status" value="1"/>
</dbReference>
<dbReference type="PIRSF" id="PIRSF001438">
    <property type="entry name" value="4pyrrol_synth_OHMeBilane_synth"/>
    <property type="match status" value="1"/>
</dbReference>
<dbReference type="PRINTS" id="PR00151">
    <property type="entry name" value="PORPHBDMNASE"/>
</dbReference>
<dbReference type="SUPFAM" id="SSF53850">
    <property type="entry name" value="Periplasmic binding protein-like II"/>
    <property type="match status" value="1"/>
</dbReference>
<dbReference type="SUPFAM" id="SSF54782">
    <property type="entry name" value="Porphobilinogen deaminase (hydroxymethylbilane synthase), C-terminal domain"/>
    <property type="match status" value="1"/>
</dbReference>
<dbReference type="PROSITE" id="PS00533">
    <property type="entry name" value="PORPHOBILINOGEN_DEAM"/>
    <property type="match status" value="1"/>
</dbReference>
<keyword id="KW-0627">Porphyrin biosynthesis</keyword>
<keyword id="KW-1185">Reference proteome</keyword>
<keyword id="KW-0808">Transferase</keyword>